<evidence type="ECO:0000255" key="1">
    <source>
        <dbReference type="HAMAP-Rule" id="MF_01318"/>
    </source>
</evidence>
<evidence type="ECO:0000305" key="2"/>
<proteinExistence type="inferred from homology"/>
<feature type="chain" id="PRO_0000125629" description="Large ribosomal subunit protein uL1">
    <location>
        <begin position="1"/>
        <end position="233"/>
    </location>
</feature>
<reference key="1">
    <citation type="journal article" date="2002" name="Proc. Natl. Acad. Sci. U.S.A.">
        <title>The Brucella suis genome reveals fundamental similarities between animal and plant pathogens and symbionts.</title>
        <authorList>
            <person name="Paulsen I.T."/>
            <person name="Seshadri R."/>
            <person name="Nelson K.E."/>
            <person name="Eisen J.A."/>
            <person name="Heidelberg J.F."/>
            <person name="Read T.D."/>
            <person name="Dodson R.J."/>
            <person name="Umayam L.A."/>
            <person name="Brinkac L.M."/>
            <person name="Beanan M.J."/>
            <person name="Daugherty S.C."/>
            <person name="DeBoy R.T."/>
            <person name="Durkin A.S."/>
            <person name="Kolonay J.F."/>
            <person name="Madupu R."/>
            <person name="Nelson W.C."/>
            <person name="Ayodeji B."/>
            <person name="Kraul M."/>
            <person name="Shetty J."/>
            <person name="Malek J.A."/>
            <person name="Van Aken S.E."/>
            <person name="Riedmuller S."/>
            <person name="Tettelin H."/>
            <person name="Gill S.R."/>
            <person name="White O."/>
            <person name="Salzberg S.L."/>
            <person name="Hoover D.L."/>
            <person name="Lindler L.E."/>
            <person name="Halling S.M."/>
            <person name="Boyle S.M."/>
            <person name="Fraser C.M."/>
        </authorList>
    </citation>
    <scope>NUCLEOTIDE SEQUENCE [LARGE SCALE GENOMIC DNA]</scope>
    <source>
        <strain>1330</strain>
    </source>
</reference>
<reference key="2">
    <citation type="journal article" date="2011" name="J. Bacteriol.">
        <title>Revised genome sequence of Brucella suis 1330.</title>
        <authorList>
            <person name="Tae H."/>
            <person name="Shallom S."/>
            <person name="Settlage R."/>
            <person name="Preston D."/>
            <person name="Adams L.G."/>
            <person name="Garner H.R."/>
        </authorList>
    </citation>
    <scope>NUCLEOTIDE SEQUENCE [LARGE SCALE GENOMIC DNA]</scope>
    <source>
        <strain>1330</strain>
    </source>
</reference>
<sequence length="233" mass="24611">MAKISKRINKIREGVDRNKLYDLSAAIGLVKERAVAKFDETVEIAMNLGVDPRHADQMVRGVVNLPNGTGRTVRVAVFARGDKAEEAKKAGADIVGAEELFEIVNGGKIEFDRCIATPDMMPLVGRLGKVLGPRGMMPNPKVGTVTTDVAAAVAASKGGAVEFRVEKAGIIHAGIGKVSFDNAKLEENIKAFADAVIKAKPSAAKGEYVKRVSISSTMGVGVKVDPSTVKVVD</sequence>
<organism>
    <name type="scientific">Brucella suis biovar 1 (strain 1330)</name>
    <dbReference type="NCBI Taxonomy" id="204722"/>
    <lineage>
        <taxon>Bacteria</taxon>
        <taxon>Pseudomonadati</taxon>
        <taxon>Pseudomonadota</taxon>
        <taxon>Alphaproteobacteria</taxon>
        <taxon>Hyphomicrobiales</taxon>
        <taxon>Brucellaceae</taxon>
        <taxon>Brucella/Ochrobactrum group</taxon>
        <taxon>Brucella</taxon>
    </lineage>
</organism>
<protein>
    <recommendedName>
        <fullName evidence="1">Large ribosomal subunit protein uL1</fullName>
    </recommendedName>
    <alternativeName>
        <fullName evidence="2">50S ribosomal protein L1</fullName>
    </alternativeName>
</protein>
<gene>
    <name evidence="1" type="primary">rplA</name>
    <name type="ordered locus">BR1247</name>
    <name type="ordered locus">BS1330_I1243</name>
</gene>
<dbReference type="EMBL" id="AE014291">
    <property type="protein sequence ID" value="AAN30166.1"/>
    <property type="molecule type" value="Genomic_DNA"/>
</dbReference>
<dbReference type="EMBL" id="CP002997">
    <property type="protein sequence ID" value="AEM18584.1"/>
    <property type="molecule type" value="Genomic_DNA"/>
</dbReference>
<dbReference type="RefSeq" id="WP_002964373.1">
    <property type="nucleotide sequence ID" value="NZ_KN046804.1"/>
</dbReference>
<dbReference type="SMR" id="Q8G066"/>
<dbReference type="GeneID" id="97533514"/>
<dbReference type="KEGG" id="bms:BR1247"/>
<dbReference type="KEGG" id="bsi:BS1330_I1243"/>
<dbReference type="PATRIC" id="fig|204722.22.peg.601"/>
<dbReference type="HOGENOM" id="CLU_062853_0_0_5"/>
<dbReference type="PhylomeDB" id="Q8G066"/>
<dbReference type="Proteomes" id="UP000007104">
    <property type="component" value="Chromosome I"/>
</dbReference>
<dbReference type="GO" id="GO:0022625">
    <property type="term" value="C:cytosolic large ribosomal subunit"/>
    <property type="evidence" value="ECO:0007669"/>
    <property type="project" value="TreeGrafter"/>
</dbReference>
<dbReference type="GO" id="GO:0019843">
    <property type="term" value="F:rRNA binding"/>
    <property type="evidence" value="ECO:0007669"/>
    <property type="project" value="UniProtKB-UniRule"/>
</dbReference>
<dbReference type="GO" id="GO:0003735">
    <property type="term" value="F:structural constituent of ribosome"/>
    <property type="evidence" value="ECO:0007669"/>
    <property type="project" value="InterPro"/>
</dbReference>
<dbReference type="GO" id="GO:0000049">
    <property type="term" value="F:tRNA binding"/>
    <property type="evidence" value="ECO:0007669"/>
    <property type="project" value="UniProtKB-KW"/>
</dbReference>
<dbReference type="GO" id="GO:0006417">
    <property type="term" value="P:regulation of translation"/>
    <property type="evidence" value="ECO:0007669"/>
    <property type="project" value="UniProtKB-KW"/>
</dbReference>
<dbReference type="GO" id="GO:0006412">
    <property type="term" value="P:translation"/>
    <property type="evidence" value="ECO:0007669"/>
    <property type="project" value="UniProtKB-UniRule"/>
</dbReference>
<dbReference type="CDD" id="cd00403">
    <property type="entry name" value="Ribosomal_L1"/>
    <property type="match status" value="1"/>
</dbReference>
<dbReference type="FunFam" id="3.40.50.790:FF:000001">
    <property type="entry name" value="50S ribosomal protein L1"/>
    <property type="match status" value="1"/>
</dbReference>
<dbReference type="Gene3D" id="3.30.190.20">
    <property type="match status" value="1"/>
</dbReference>
<dbReference type="Gene3D" id="3.40.50.790">
    <property type="match status" value="1"/>
</dbReference>
<dbReference type="HAMAP" id="MF_01318_B">
    <property type="entry name" value="Ribosomal_uL1_B"/>
    <property type="match status" value="1"/>
</dbReference>
<dbReference type="InterPro" id="IPR005878">
    <property type="entry name" value="Ribosom_uL1_bac-type"/>
</dbReference>
<dbReference type="InterPro" id="IPR002143">
    <property type="entry name" value="Ribosomal_uL1"/>
</dbReference>
<dbReference type="InterPro" id="IPR023674">
    <property type="entry name" value="Ribosomal_uL1-like"/>
</dbReference>
<dbReference type="InterPro" id="IPR028364">
    <property type="entry name" value="Ribosomal_uL1/biogenesis"/>
</dbReference>
<dbReference type="InterPro" id="IPR016095">
    <property type="entry name" value="Ribosomal_uL1_3-a/b-sand"/>
</dbReference>
<dbReference type="InterPro" id="IPR023673">
    <property type="entry name" value="Ribosomal_uL1_CS"/>
</dbReference>
<dbReference type="NCBIfam" id="TIGR01169">
    <property type="entry name" value="rplA_bact"/>
    <property type="match status" value="1"/>
</dbReference>
<dbReference type="PANTHER" id="PTHR36427">
    <property type="entry name" value="54S RIBOSOMAL PROTEIN L1, MITOCHONDRIAL"/>
    <property type="match status" value="1"/>
</dbReference>
<dbReference type="PANTHER" id="PTHR36427:SF3">
    <property type="entry name" value="LARGE RIBOSOMAL SUBUNIT PROTEIN UL1M"/>
    <property type="match status" value="1"/>
</dbReference>
<dbReference type="Pfam" id="PF00687">
    <property type="entry name" value="Ribosomal_L1"/>
    <property type="match status" value="1"/>
</dbReference>
<dbReference type="PIRSF" id="PIRSF002155">
    <property type="entry name" value="Ribosomal_L1"/>
    <property type="match status" value="1"/>
</dbReference>
<dbReference type="SUPFAM" id="SSF56808">
    <property type="entry name" value="Ribosomal protein L1"/>
    <property type="match status" value="1"/>
</dbReference>
<dbReference type="PROSITE" id="PS01199">
    <property type="entry name" value="RIBOSOMAL_L1"/>
    <property type="match status" value="1"/>
</dbReference>
<name>RL1_BRUSU</name>
<accession>Q8G066</accession>
<accession>G0KAG8</accession>
<comment type="function">
    <text evidence="1">Binds directly to 23S rRNA. The L1 stalk is quite mobile in the ribosome, and is involved in E site tRNA release.</text>
</comment>
<comment type="function">
    <text evidence="1">Protein L1 is also a translational repressor protein, it controls the translation of the L11 operon by binding to its mRNA.</text>
</comment>
<comment type="subunit">
    <text evidence="1">Part of the 50S ribosomal subunit.</text>
</comment>
<comment type="similarity">
    <text evidence="1">Belongs to the universal ribosomal protein uL1 family.</text>
</comment>
<keyword id="KW-0678">Repressor</keyword>
<keyword id="KW-0687">Ribonucleoprotein</keyword>
<keyword id="KW-0689">Ribosomal protein</keyword>
<keyword id="KW-0694">RNA-binding</keyword>
<keyword id="KW-0699">rRNA-binding</keyword>
<keyword id="KW-0810">Translation regulation</keyword>
<keyword id="KW-0820">tRNA-binding</keyword>